<dbReference type="EMBL" id="CP000847">
    <property type="protein sequence ID" value="ABV75210.1"/>
    <property type="molecule type" value="Genomic_DNA"/>
</dbReference>
<dbReference type="RefSeq" id="WP_012149840.1">
    <property type="nucleotide sequence ID" value="NC_009881.1"/>
</dbReference>
<dbReference type="SMR" id="A8GP85"/>
<dbReference type="STRING" id="293614.A1C_04750"/>
<dbReference type="KEGG" id="rak:A1C_04750"/>
<dbReference type="eggNOG" id="COG1825">
    <property type="taxonomic scope" value="Bacteria"/>
</dbReference>
<dbReference type="HOGENOM" id="CLU_075939_0_0_5"/>
<dbReference type="Proteomes" id="UP000006830">
    <property type="component" value="Chromosome"/>
</dbReference>
<dbReference type="GO" id="GO:0022625">
    <property type="term" value="C:cytosolic large ribosomal subunit"/>
    <property type="evidence" value="ECO:0007669"/>
    <property type="project" value="TreeGrafter"/>
</dbReference>
<dbReference type="GO" id="GO:0008097">
    <property type="term" value="F:5S rRNA binding"/>
    <property type="evidence" value="ECO:0007669"/>
    <property type="project" value="InterPro"/>
</dbReference>
<dbReference type="GO" id="GO:0003735">
    <property type="term" value="F:structural constituent of ribosome"/>
    <property type="evidence" value="ECO:0007669"/>
    <property type="project" value="InterPro"/>
</dbReference>
<dbReference type="GO" id="GO:0006412">
    <property type="term" value="P:translation"/>
    <property type="evidence" value="ECO:0007669"/>
    <property type="project" value="UniProtKB-UniRule"/>
</dbReference>
<dbReference type="CDD" id="cd00495">
    <property type="entry name" value="Ribosomal_L25_TL5_CTC"/>
    <property type="match status" value="1"/>
</dbReference>
<dbReference type="Gene3D" id="2.170.120.20">
    <property type="entry name" value="Ribosomal protein L25, beta domain"/>
    <property type="match status" value="1"/>
</dbReference>
<dbReference type="Gene3D" id="2.40.240.10">
    <property type="entry name" value="Ribosomal Protein L25, Chain P"/>
    <property type="match status" value="1"/>
</dbReference>
<dbReference type="HAMAP" id="MF_01336">
    <property type="entry name" value="Ribosomal_bL25"/>
    <property type="match status" value="1"/>
</dbReference>
<dbReference type="HAMAP" id="MF_01334">
    <property type="entry name" value="Ribosomal_bL25_CTC"/>
    <property type="match status" value="1"/>
</dbReference>
<dbReference type="InterPro" id="IPR020056">
    <property type="entry name" value="Rbsml_bL25/Gln-tRNA_synth_N"/>
</dbReference>
<dbReference type="InterPro" id="IPR011035">
    <property type="entry name" value="Ribosomal_bL25/Gln-tRNA_synth"/>
</dbReference>
<dbReference type="InterPro" id="IPR020057">
    <property type="entry name" value="Ribosomal_bL25_b-dom"/>
</dbReference>
<dbReference type="InterPro" id="IPR037121">
    <property type="entry name" value="Ribosomal_bL25_C"/>
</dbReference>
<dbReference type="InterPro" id="IPR001021">
    <property type="entry name" value="Ribosomal_bL25_long"/>
</dbReference>
<dbReference type="InterPro" id="IPR020055">
    <property type="entry name" value="Ribosomal_bL25_short"/>
</dbReference>
<dbReference type="InterPro" id="IPR029751">
    <property type="entry name" value="Ribosomal_L25_dom"/>
</dbReference>
<dbReference type="InterPro" id="IPR020930">
    <property type="entry name" value="Ribosomal_uL5_bac-type"/>
</dbReference>
<dbReference type="NCBIfam" id="TIGR00731">
    <property type="entry name" value="bL25_bact_ctc"/>
    <property type="match status" value="1"/>
</dbReference>
<dbReference type="NCBIfam" id="NF004128">
    <property type="entry name" value="PRK05618.1-2"/>
    <property type="match status" value="1"/>
</dbReference>
<dbReference type="NCBIfam" id="NF004612">
    <property type="entry name" value="PRK05943.1"/>
    <property type="match status" value="1"/>
</dbReference>
<dbReference type="PANTHER" id="PTHR33284">
    <property type="entry name" value="RIBOSOMAL PROTEIN L25/GLN-TRNA SYNTHETASE, ANTI-CODON-BINDING DOMAIN-CONTAINING PROTEIN"/>
    <property type="match status" value="1"/>
</dbReference>
<dbReference type="PANTHER" id="PTHR33284:SF1">
    <property type="entry name" value="RIBOSOMAL PROTEIN L25_GLN-TRNA SYNTHETASE, ANTI-CODON-BINDING DOMAIN-CONTAINING PROTEIN"/>
    <property type="match status" value="1"/>
</dbReference>
<dbReference type="Pfam" id="PF01386">
    <property type="entry name" value="Ribosomal_L25p"/>
    <property type="match status" value="1"/>
</dbReference>
<dbReference type="Pfam" id="PF14693">
    <property type="entry name" value="Ribosomal_TL5_C"/>
    <property type="match status" value="1"/>
</dbReference>
<dbReference type="SUPFAM" id="SSF50715">
    <property type="entry name" value="Ribosomal protein L25-like"/>
    <property type="match status" value="1"/>
</dbReference>
<proteinExistence type="inferred from homology"/>
<comment type="function">
    <text evidence="1">This is one of the proteins that binds to the 5S RNA in the ribosome where it forms part of the central protuberance.</text>
</comment>
<comment type="subunit">
    <text evidence="1">Part of the 50S ribosomal subunit; part of the 5S rRNA/L5/L18/L25 subcomplex. Contacts the 5S rRNA. Binds to the 5S rRNA independently of L5 and L18.</text>
</comment>
<comment type="similarity">
    <text evidence="1">Belongs to the bacterial ribosomal protein bL25 family. CTC subfamily.</text>
</comment>
<feature type="chain" id="PRO_1000052930" description="Large ribosomal subunit protein bL25">
    <location>
        <begin position="1"/>
        <end position="199"/>
    </location>
</feature>
<organism>
    <name type="scientific">Rickettsia akari (strain Hartford)</name>
    <dbReference type="NCBI Taxonomy" id="293614"/>
    <lineage>
        <taxon>Bacteria</taxon>
        <taxon>Pseudomonadati</taxon>
        <taxon>Pseudomonadota</taxon>
        <taxon>Alphaproteobacteria</taxon>
        <taxon>Rickettsiales</taxon>
        <taxon>Rickettsiaceae</taxon>
        <taxon>Rickettsieae</taxon>
        <taxon>Rickettsia</taxon>
        <taxon>spotted fever group</taxon>
    </lineage>
</organism>
<protein>
    <recommendedName>
        <fullName evidence="1">Large ribosomal subunit protein bL25</fullName>
    </recommendedName>
    <alternativeName>
        <fullName evidence="2">50S ribosomal protein L25</fullName>
    </alternativeName>
    <alternativeName>
        <fullName evidence="1">General stress protein CTC</fullName>
    </alternativeName>
</protein>
<gene>
    <name evidence="1" type="primary">rplY</name>
    <name evidence="1" type="synonym">ctc</name>
    <name type="ordered locus">A1C_04750</name>
</gene>
<reference key="1">
    <citation type="submission" date="2007-09" db="EMBL/GenBank/DDBJ databases">
        <title>Complete genome sequence of Rickettsia akari.</title>
        <authorList>
            <person name="Madan A."/>
            <person name="Fahey J."/>
            <person name="Helton E."/>
            <person name="Ketteman M."/>
            <person name="Madan A."/>
            <person name="Rodrigues S."/>
            <person name="Sanchez A."/>
            <person name="Whiting M."/>
            <person name="Dasch G."/>
            <person name="Eremeeva M."/>
        </authorList>
    </citation>
    <scope>NUCLEOTIDE SEQUENCE [LARGE SCALE GENOMIC DNA]</scope>
    <source>
        <strain>Hartford</strain>
    </source>
</reference>
<sequence>MSEILDLEAKPRTEFGTGAARALRREGRVPAIIYGAGKTPVSISLEEKAITKYYRKPAFISQLINVTIDQKQYKVLPKAVELHPVTDMVRHVDFVFLEAKTQKMEVPIVYEGKERALGVKRGGYFNIVKRRVTLLCDVNNIPRNVTIDVTNMPIATSLKSSKIELPKGCSFVTKKEFVLATIIGRRGAKTEAEAPEVGK</sequence>
<keyword id="KW-0687">Ribonucleoprotein</keyword>
<keyword id="KW-0689">Ribosomal protein</keyword>
<keyword id="KW-0694">RNA-binding</keyword>
<keyword id="KW-0699">rRNA-binding</keyword>
<name>RL25_RICAH</name>
<evidence type="ECO:0000255" key="1">
    <source>
        <dbReference type="HAMAP-Rule" id="MF_01334"/>
    </source>
</evidence>
<evidence type="ECO:0000305" key="2"/>
<accession>A8GP85</accession>